<dbReference type="EMBL" id="AF133301">
    <property type="protein sequence ID" value="AAF61375.1"/>
    <property type="molecule type" value="mRNA"/>
</dbReference>
<dbReference type="EMBL" id="AJ133120">
    <property type="protein sequence ID" value="CAB45688.1"/>
    <property type="molecule type" value="mRNA"/>
</dbReference>
<dbReference type="EMBL" id="AF159047">
    <property type="protein sequence ID" value="AAD42976.1"/>
    <property type="status" value="ALT_FRAME"/>
    <property type="molecule type" value="mRNA"/>
</dbReference>
<dbReference type="RefSeq" id="NP_067708.1">
    <property type="nucleotide sequence ID" value="NM_021676.1"/>
</dbReference>
<dbReference type="PDB" id="2F3N">
    <property type="method" value="X-ray"/>
    <property type="resolution" value="2.10 A"/>
    <property type="chains" value="A/B/C=1674-1740"/>
</dbReference>
<dbReference type="PDB" id="2F44">
    <property type="method" value="X-ray"/>
    <property type="resolution" value="2.40 A"/>
    <property type="chains" value="A/B/C=1674-1740"/>
</dbReference>
<dbReference type="PDB" id="5G4X">
    <property type="method" value="X-ray"/>
    <property type="resolution" value="2.17 A"/>
    <property type="chains" value="A=1-348"/>
</dbReference>
<dbReference type="PDB" id="5O99">
    <property type="method" value="X-ray"/>
    <property type="resolution" value="0.87 A"/>
    <property type="chains" value="A/B=470-528"/>
</dbReference>
<dbReference type="PDB" id="5OVA">
    <property type="method" value="X-ray"/>
    <property type="resolution" value="2.30 A"/>
    <property type="chains" value="A/B=570-664"/>
</dbReference>
<dbReference type="PDB" id="5OVC">
    <property type="method" value="X-ray"/>
    <property type="resolution" value="1.55 A"/>
    <property type="chains" value="A=570-664"/>
</dbReference>
<dbReference type="PDB" id="5OVP">
    <property type="method" value="X-ray"/>
    <property type="resolution" value="1.50 A"/>
    <property type="chains" value="A=570-664"/>
</dbReference>
<dbReference type="PDB" id="5OVV">
    <property type="method" value="X-ray"/>
    <property type="resolution" value="1.40 A"/>
    <property type="chains" value="A=570-664"/>
</dbReference>
<dbReference type="PDB" id="6EXJ">
    <property type="method" value="X-ray"/>
    <property type="resolution" value="1.80 A"/>
    <property type="chains" value="A/C=570-664"/>
</dbReference>
<dbReference type="PDBsum" id="2F3N"/>
<dbReference type="PDBsum" id="2F44"/>
<dbReference type="PDBsum" id="5G4X"/>
<dbReference type="PDBsum" id="5O99"/>
<dbReference type="PDBsum" id="5OVA"/>
<dbReference type="PDBsum" id="5OVC"/>
<dbReference type="PDBsum" id="5OVP"/>
<dbReference type="PDBsum" id="5OVV"/>
<dbReference type="PDBsum" id="6EXJ"/>
<dbReference type="SASBDB" id="Q9JLU4"/>
<dbReference type="SMR" id="Q9JLU4"/>
<dbReference type="BioGRID" id="248756">
    <property type="interactions" value="17"/>
</dbReference>
<dbReference type="FunCoup" id="Q9JLU4">
    <property type="interactions" value="531"/>
</dbReference>
<dbReference type="IntAct" id="Q9JLU4">
    <property type="interactions" value="11"/>
</dbReference>
<dbReference type="MINT" id="Q9JLU4"/>
<dbReference type="STRING" id="10116.ENSRNOP00000071295"/>
<dbReference type="GlyGen" id="Q9JLU4">
    <property type="glycosylation" value="3 sites"/>
</dbReference>
<dbReference type="iPTMnet" id="Q9JLU4"/>
<dbReference type="PhosphoSitePlus" id="Q9JLU4"/>
<dbReference type="PaxDb" id="10116-ENSRNOP00000041083"/>
<dbReference type="ABCD" id="Q9JLU4">
    <property type="antibodies" value="4 sequenced antibodies"/>
</dbReference>
<dbReference type="GeneID" id="59312"/>
<dbReference type="KEGG" id="rno:59312"/>
<dbReference type="AGR" id="RGD:69264"/>
<dbReference type="CTD" id="85358"/>
<dbReference type="RGD" id="69264">
    <property type="gene designation" value="Shank3"/>
</dbReference>
<dbReference type="eggNOG" id="KOG0504">
    <property type="taxonomic scope" value="Eukaryota"/>
</dbReference>
<dbReference type="eggNOG" id="KOG4375">
    <property type="taxonomic scope" value="Eukaryota"/>
</dbReference>
<dbReference type="InParanoid" id="Q9JLU4"/>
<dbReference type="Reactome" id="R-RNO-6794361">
    <property type="pathway name" value="Neurexins and neuroligins"/>
</dbReference>
<dbReference type="Reactome" id="R-RNO-8853659">
    <property type="pathway name" value="RET signaling"/>
</dbReference>
<dbReference type="EvolutionaryTrace" id="Q9JLU4"/>
<dbReference type="PRO" id="PR:Q9JLU4"/>
<dbReference type="Proteomes" id="UP000002494">
    <property type="component" value="Unplaced"/>
</dbReference>
<dbReference type="GO" id="GO:0060170">
    <property type="term" value="C:ciliary membrane"/>
    <property type="evidence" value="ECO:0000314"/>
    <property type="project" value="BHF-UCL"/>
</dbReference>
<dbReference type="GO" id="GO:0005737">
    <property type="term" value="C:cytoplasm"/>
    <property type="evidence" value="ECO:0007669"/>
    <property type="project" value="UniProtKB-SubCell"/>
</dbReference>
<dbReference type="GO" id="GO:0043197">
    <property type="term" value="C:dendritic spine"/>
    <property type="evidence" value="ECO:0000318"/>
    <property type="project" value="GO_Central"/>
</dbReference>
<dbReference type="GO" id="GO:0098978">
    <property type="term" value="C:glutamatergic synapse"/>
    <property type="evidence" value="ECO:0000314"/>
    <property type="project" value="SynGO"/>
</dbReference>
<dbReference type="GO" id="GO:0043005">
    <property type="term" value="C:neuron projection"/>
    <property type="evidence" value="ECO:0000250"/>
    <property type="project" value="BHF-UCL"/>
</dbReference>
<dbReference type="GO" id="GO:0044309">
    <property type="term" value="C:neuron spine"/>
    <property type="evidence" value="ECO:0000250"/>
    <property type="project" value="BHF-UCL"/>
</dbReference>
<dbReference type="GO" id="GO:0005886">
    <property type="term" value="C:plasma membrane"/>
    <property type="evidence" value="ECO:0000250"/>
    <property type="project" value="BHF-UCL"/>
</dbReference>
<dbReference type="GO" id="GO:0014069">
    <property type="term" value="C:postsynaptic density"/>
    <property type="evidence" value="ECO:0000314"/>
    <property type="project" value="UniProtKB"/>
</dbReference>
<dbReference type="GO" id="GO:0099092">
    <property type="term" value="C:postsynaptic density, intracellular component"/>
    <property type="evidence" value="ECO:0000314"/>
    <property type="project" value="SynGO"/>
</dbReference>
<dbReference type="GO" id="GO:0003779">
    <property type="term" value="F:actin binding"/>
    <property type="evidence" value="ECO:0007669"/>
    <property type="project" value="UniProtKB-KW"/>
</dbReference>
<dbReference type="GO" id="GO:0001664">
    <property type="term" value="F:G protein-coupled receptor binding"/>
    <property type="evidence" value="ECO:0000353"/>
    <property type="project" value="RGD"/>
</dbReference>
<dbReference type="GO" id="GO:0042802">
    <property type="term" value="F:identical protein binding"/>
    <property type="evidence" value="ECO:0000314"/>
    <property type="project" value="RGD"/>
</dbReference>
<dbReference type="GO" id="GO:0035255">
    <property type="term" value="F:ionotropic glutamate receptor binding"/>
    <property type="evidence" value="ECO:0000250"/>
    <property type="project" value="BHF-UCL"/>
</dbReference>
<dbReference type="GO" id="GO:0044877">
    <property type="term" value="F:protein-containing complex binding"/>
    <property type="evidence" value="ECO:0000314"/>
    <property type="project" value="RGD"/>
</dbReference>
<dbReference type="GO" id="GO:0097110">
    <property type="term" value="F:scaffold protein binding"/>
    <property type="evidence" value="ECO:0000353"/>
    <property type="project" value="BHF-UCL"/>
</dbReference>
<dbReference type="GO" id="GO:0017124">
    <property type="term" value="F:SH3 domain binding"/>
    <property type="evidence" value="ECO:0000353"/>
    <property type="project" value="RGD"/>
</dbReference>
<dbReference type="GO" id="GO:0098919">
    <property type="term" value="F:structural constituent of postsynaptic density"/>
    <property type="evidence" value="ECO:0000314"/>
    <property type="project" value="SynGO"/>
</dbReference>
<dbReference type="GO" id="GO:0030160">
    <property type="term" value="F:synaptic receptor adaptor activity"/>
    <property type="evidence" value="ECO:0000314"/>
    <property type="project" value="BHF-UCL"/>
</dbReference>
<dbReference type="GO" id="GO:0008270">
    <property type="term" value="F:zinc ion binding"/>
    <property type="evidence" value="ECO:0000314"/>
    <property type="project" value="RGD"/>
</dbReference>
<dbReference type="GO" id="GO:0030534">
    <property type="term" value="P:adult behavior"/>
    <property type="evidence" value="ECO:0000266"/>
    <property type="project" value="RGD"/>
</dbReference>
<dbReference type="GO" id="GO:0097113">
    <property type="term" value="P:AMPA glutamate receptor clustering"/>
    <property type="evidence" value="ECO:0000250"/>
    <property type="project" value="BHF-UCL"/>
</dbReference>
<dbReference type="GO" id="GO:0008306">
    <property type="term" value="P:associative learning"/>
    <property type="evidence" value="ECO:0000266"/>
    <property type="project" value="RGD"/>
</dbReference>
<dbReference type="GO" id="GO:0048854">
    <property type="term" value="P:brain morphogenesis"/>
    <property type="evidence" value="ECO:0000250"/>
    <property type="project" value="BHF-UCL"/>
</dbReference>
<dbReference type="GO" id="GO:0060997">
    <property type="term" value="P:dendritic spine morphogenesis"/>
    <property type="evidence" value="ECO:0000250"/>
    <property type="project" value="BHF-UCL"/>
</dbReference>
<dbReference type="GO" id="GO:0001838">
    <property type="term" value="P:embryonic epithelial tube formation"/>
    <property type="evidence" value="ECO:0000266"/>
    <property type="project" value="RGD"/>
</dbReference>
<dbReference type="GO" id="GO:0035640">
    <property type="term" value="P:exploration behavior"/>
    <property type="evidence" value="ECO:0000266"/>
    <property type="project" value="RGD"/>
</dbReference>
<dbReference type="GO" id="GO:0010467">
    <property type="term" value="P:gene expression"/>
    <property type="evidence" value="ECO:0000266"/>
    <property type="project" value="RGD"/>
</dbReference>
<dbReference type="GO" id="GO:0014009">
    <property type="term" value="P:glial cell proliferation"/>
    <property type="evidence" value="ECO:0000266"/>
    <property type="project" value="RGD"/>
</dbReference>
<dbReference type="GO" id="GO:0097117">
    <property type="term" value="P:guanylate kinase-associated protein clustering"/>
    <property type="evidence" value="ECO:0000250"/>
    <property type="project" value="BHF-UCL"/>
</dbReference>
<dbReference type="GO" id="GO:0007612">
    <property type="term" value="P:learning"/>
    <property type="evidence" value="ECO:0000250"/>
    <property type="project" value="BHF-UCL"/>
</dbReference>
<dbReference type="GO" id="GO:0007611">
    <property type="term" value="P:learning or memory"/>
    <property type="evidence" value="ECO:0000266"/>
    <property type="project" value="RGD"/>
</dbReference>
<dbReference type="GO" id="GO:0040011">
    <property type="term" value="P:locomotion"/>
    <property type="evidence" value="ECO:0000266"/>
    <property type="project" value="RGD"/>
</dbReference>
<dbReference type="GO" id="GO:0007626">
    <property type="term" value="P:locomotory behavior"/>
    <property type="evidence" value="ECO:0000266"/>
    <property type="project" value="RGD"/>
</dbReference>
<dbReference type="GO" id="GO:0035641">
    <property type="term" value="P:locomotory exploration behavior"/>
    <property type="evidence" value="ECO:0000250"/>
    <property type="project" value="BHF-UCL"/>
</dbReference>
<dbReference type="GO" id="GO:0060292">
    <property type="term" value="P:long-term synaptic depression"/>
    <property type="evidence" value="ECO:0000266"/>
    <property type="project" value="RGD"/>
</dbReference>
<dbReference type="GO" id="GO:0060291">
    <property type="term" value="P:long-term synaptic potentiation"/>
    <property type="evidence" value="ECO:0000266"/>
    <property type="project" value="RGD"/>
</dbReference>
<dbReference type="GO" id="GO:0000165">
    <property type="term" value="P:MAPK cascade"/>
    <property type="evidence" value="ECO:0000250"/>
    <property type="project" value="BHF-UCL"/>
</dbReference>
<dbReference type="GO" id="GO:0007613">
    <property type="term" value="P:memory"/>
    <property type="evidence" value="ECO:0000250"/>
    <property type="project" value="BHF-UCL"/>
</dbReference>
<dbReference type="GO" id="GO:0050804">
    <property type="term" value="P:modulation of chemical synaptic transmission"/>
    <property type="evidence" value="ECO:0000266"/>
    <property type="project" value="RGD"/>
</dbReference>
<dbReference type="GO" id="GO:0032232">
    <property type="term" value="P:negative regulation of actin filament bundle assembly"/>
    <property type="evidence" value="ECO:0000250"/>
    <property type="project" value="BHF-UCL"/>
</dbReference>
<dbReference type="GO" id="GO:0045794">
    <property type="term" value="P:negative regulation of cell volume"/>
    <property type="evidence" value="ECO:0000250"/>
    <property type="project" value="BHF-UCL"/>
</dbReference>
<dbReference type="GO" id="GO:0061351">
    <property type="term" value="P:neural precursor cell proliferation"/>
    <property type="evidence" value="ECO:0000266"/>
    <property type="project" value="RGD"/>
</dbReference>
<dbReference type="GO" id="GO:0050885">
    <property type="term" value="P:neuromuscular process controlling balance"/>
    <property type="evidence" value="ECO:0000250"/>
    <property type="project" value="BHF-UCL"/>
</dbReference>
<dbReference type="GO" id="GO:0097114">
    <property type="term" value="P:NMDA glutamate receptor clustering"/>
    <property type="evidence" value="ECO:0000250"/>
    <property type="project" value="BHF-UCL"/>
</dbReference>
<dbReference type="GO" id="GO:0060999">
    <property type="term" value="P:positive regulation of dendritic spine development"/>
    <property type="evidence" value="ECO:0000250"/>
    <property type="project" value="BHF-UCL"/>
</dbReference>
<dbReference type="GO" id="GO:2000463">
    <property type="term" value="P:positive regulation of excitatory postsynaptic potential"/>
    <property type="evidence" value="ECO:0000250"/>
    <property type="project" value="BHF-UCL"/>
</dbReference>
<dbReference type="GO" id="GO:1900451">
    <property type="term" value="P:positive regulation of glutamate receptor signaling pathway"/>
    <property type="evidence" value="ECO:0000315"/>
    <property type="project" value="RGD"/>
</dbReference>
<dbReference type="GO" id="GO:0048170">
    <property type="term" value="P:positive regulation of long-term neuronal synaptic plasticity"/>
    <property type="evidence" value="ECO:0000250"/>
    <property type="project" value="BHF-UCL"/>
</dbReference>
<dbReference type="GO" id="GO:1900273">
    <property type="term" value="P:positive regulation of long-term synaptic potentiation"/>
    <property type="evidence" value="ECO:0000250"/>
    <property type="project" value="BHF-UCL"/>
</dbReference>
<dbReference type="GO" id="GO:0051835">
    <property type="term" value="P:positive regulation of synapse structural plasticity"/>
    <property type="evidence" value="ECO:0000250"/>
    <property type="project" value="BHF-UCL"/>
</dbReference>
<dbReference type="GO" id="GO:0051968">
    <property type="term" value="P:positive regulation of synaptic transmission, glutamatergic"/>
    <property type="evidence" value="ECO:0000250"/>
    <property type="project" value="BHF-UCL"/>
</dbReference>
<dbReference type="GO" id="GO:0097107">
    <property type="term" value="P:postsynaptic density assembly"/>
    <property type="evidence" value="ECO:0000250"/>
    <property type="project" value="BHF-UCL"/>
</dbReference>
<dbReference type="GO" id="GO:1904717">
    <property type="term" value="P:regulation of AMPA glutamate receptor clustering"/>
    <property type="evidence" value="ECO:0000266"/>
    <property type="project" value="RGD"/>
</dbReference>
<dbReference type="GO" id="GO:2000822">
    <property type="term" value="P:regulation of behavioral fear response"/>
    <property type="evidence" value="ECO:0000250"/>
    <property type="project" value="BHF-UCL"/>
</dbReference>
<dbReference type="GO" id="GO:0061001">
    <property type="term" value="P:regulation of dendritic spine morphogenesis"/>
    <property type="evidence" value="ECO:0000250"/>
    <property type="project" value="BHF-UCL"/>
</dbReference>
<dbReference type="GO" id="GO:2000821">
    <property type="term" value="P:regulation of grooming behavior"/>
    <property type="evidence" value="ECO:0000266"/>
    <property type="project" value="RGD"/>
</dbReference>
<dbReference type="GO" id="GO:1900452">
    <property type="term" value="P:regulation of long-term synaptic depression"/>
    <property type="evidence" value="ECO:0000250"/>
    <property type="project" value="BHF-UCL"/>
</dbReference>
<dbReference type="GO" id="GO:1900271">
    <property type="term" value="P:regulation of long-term synaptic potentiation"/>
    <property type="evidence" value="ECO:0000250"/>
    <property type="project" value="BHF-UCL"/>
</dbReference>
<dbReference type="GO" id="GO:0099175">
    <property type="term" value="P:regulation of postsynapse organization"/>
    <property type="evidence" value="ECO:0000314"/>
    <property type="project" value="SynGO"/>
</dbReference>
<dbReference type="GO" id="GO:0048167">
    <property type="term" value="P:regulation of synaptic plasticity"/>
    <property type="evidence" value="ECO:0000266"/>
    <property type="project" value="RGD"/>
</dbReference>
<dbReference type="GO" id="GO:0097396">
    <property type="term" value="P:response to interleukin-17"/>
    <property type="evidence" value="ECO:0000266"/>
    <property type="project" value="RGD"/>
</dbReference>
<dbReference type="GO" id="GO:0035176">
    <property type="term" value="P:social behavior"/>
    <property type="evidence" value="ECO:0000250"/>
    <property type="project" value="BHF-UCL"/>
</dbReference>
<dbReference type="GO" id="GO:0021773">
    <property type="term" value="P:striatal medium spiny neuron differentiation"/>
    <property type="evidence" value="ECO:0000250"/>
    <property type="project" value="BHF-UCL"/>
</dbReference>
<dbReference type="GO" id="GO:0007416">
    <property type="term" value="P:synapse assembly"/>
    <property type="evidence" value="ECO:0000250"/>
    <property type="project" value="BHF-UCL"/>
</dbReference>
<dbReference type="GO" id="GO:0042297">
    <property type="term" value="P:vocal learning"/>
    <property type="evidence" value="ECO:0000266"/>
    <property type="project" value="RGD"/>
</dbReference>
<dbReference type="GO" id="GO:0071625">
    <property type="term" value="P:vocalization behavior"/>
    <property type="evidence" value="ECO:0000250"/>
    <property type="project" value="BHF-UCL"/>
</dbReference>
<dbReference type="CDD" id="cd06746">
    <property type="entry name" value="PDZ_SHANK1_3-like"/>
    <property type="match status" value="1"/>
</dbReference>
<dbReference type="CDD" id="cd09506">
    <property type="entry name" value="SAM_Shank1_2_3"/>
    <property type="match status" value="1"/>
</dbReference>
<dbReference type="FunFam" id="3.10.20.90:FF:000029">
    <property type="entry name" value="SH3 and multiple ankyrin repeat domains protein 1"/>
    <property type="match status" value="1"/>
</dbReference>
<dbReference type="FunFam" id="1.10.150.50:FF:000006">
    <property type="entry name" value="SH3 and multiple ankyrin repeat domains protein 2"/>
    <property type="match status" value="1"/>
</dbReference>
<dbReference type="FunFam" id="2.30.30.40:FF:000025">
    <property type="entry name" value="SH3 and multiple ankyrin repeat domains protein 2"/>
    <property type="match status" value="1"/>
</dbReference>
<dbReference type="FunFam" id="2.30.42.10:FF:000018">
    <property type="entry name" value="SH3 and multiple ankyrin repeat domains protein 2"/>
    <property type="match status" value="1"/>
</dbReference>
<dbReference type="FunFam" id="1.25.40.20:FF:000048">
    <property type="entry name" value="SH3 and multiple ankyrin repeat domains protein 3"/>
    <property type="match status" value="1"/>
</dbReference>
<dbReference type="FunFam" id="1.25.40.20:FF:000064">
    <property type="entry name" value="SH3 and multiple ankyrin repeat domains protein 3"/>
    <property type="match status" value="1"/>
</dbReference>
<dbReference type="Gene3D" id="2.30.42.10">
    <property type="match status" value="1"/>
</dbReference>
<dbReference type="Gene3D" id="1.25.40.20">
    <property type="entry name" value="Ankyrin repeat-containing domain"/>
    <property type="match status" value="2"/>
</dbReference>
<dbReference type="Gene3D" id="3.10.20.90">
    <property type="entry name" value="Phosphatidylinositol 3-kinase Catalytic Subunit, Chain A, domain 1"/>
    <property type="match status" value="1"/>
</dbReference>
<dbReference type="Gene3D" id="2.30.30.40">
    <property type="entry name" value="SH3 Domains"/>
    <property type="match status" value="1"/>
</dbReference>
<dbReference type="Gene3D" id="1.10.150.50">
    <property type="entry name" value="Transcription Factor, Ets-1"/>
    <property type="match status" value="1"/>
</dbReference>
<dbReference type="InterPro" id="IPR002110">
    <property type="entry name" value="Ankyrin_rpt"/>
</dbReference>
<dbReference type="InterPro" id="IPR036770">
    <property type="entry name" value="Ankyrin_rpt-contain_sf"/>
</dbReference>
<dbReference type="InterPro" id="IPR001478">
    <property type="entry name" value="PDZ"/>
</dbReference>
<dbReference type="InterPro" id="IPR041489">
    <property type="entry name" value="PDZ_6"/>
</dbReference>
<dbReference type="InterPro" id="IPR036034">
    <property type="entry name" value="PDZ_sf"/>
</dbReference>
<dbReference type="InterPro" id="IPR001660">
    <property type="entry name" value="SAM"/>
</dbReference>
<dbReference type="InterPro" id="IPR013761">
    <property type="entry name" value="SAM/pointed_sf"/>
</dbReference>
<dbReference type="InterPro" id="IPR036028">
    <property type="entry name" value="SH3-like_dom_sf"/>
</dbReference>
<dbReference type="InterPro" id="IPR001452">
    <property type="entry name" value="SH3_domain"/>
</dbReference>
<dbReference type="InterPro" id="IPR051569">
    <property type="entry name" value="SHANK"/>
</dbReference>
<dbReference type="PANTHER" id="PTHR24135">
    <property type="entry name" value="SH3 AND MULTIPLE ANKYRIN REPEAT DOMAINS PROTEIN"/>
    <property type="match status" value="1"/>
</dbReference>
<dbReference type="PANTHER" id="PTHR24135:SF4">
    <property type="entry name" value="SH3 AND MULTIPLE ANKYRIN REPEAT DOMAINS PROTEIN 3"/>
    <property type="match status" value="1"/>
</dbReference>
<dbReference type="Pfam" id="PF12796">
    <property type="entry name" value="Ank_2"/>
    <property type="match status" value="2"/>
</dbReference>
<dbReference type="Pfam" id="PF17820">
    <property type="entry name" value="PDZ_6"/>
    <property type="match status" value="1"/>
</dbReference>
<dbReference type="Pfam" id="PF00536">
    <property type="entry name" value="SAM_1"/>
    <property type="match status" value="1"/>
</dbReference>
<dbReference type="Pfam" id="PF07653">
    <property type="entry name" value="SH3_2"/>
    <property type="match status" value="1"/>
</dbReference>
<dbReference type="SMART" id="SM00248">
    <property type="entry name" value="ANK"/>
    <property type="match status" value="5"/>
</dbReference>
<dbReference type="SMART" id="SM00228">
    <property type="entry name" value="PDZ"/>
    <property type="match status" value="1"/>
</dbReference>
<dbReference type="SMART" id="SM00454">
    <property type="entry name" value="SAM"/>
    <property type="match status" value="1"/>
</dbReference>
<dbReference type="SMART" id="SM00326">
    <property type="entry name" value="SH3"/>
    <property type="match status" value="1"/>
</dbReference>
<dbReference type="SUPFAM" id="SSF48403">
    <property type="entry name" value="Ankyrin repeat"/>
    <property type="match status" value="1"/>
</dbReference>
<dbReference type="SUPFAM" id="SSF50156">
    <property type="entry name" value="PDZ domain-like"/>
    <property type="match status" value="1"/>
</dbReference>
<dbReference type="SUPFAM" id="SSF47769">
    <property type="entry name" value="SAM/Pointed domain"/>
    <property type="match status" value="1"/>
</dbReference>
<dbReference type="SUPFAM" id="SSF50044">
    <property type="entry name" value="SH3-domain"/>
    <property type="match status" value="1"/>
</dbReference>
<dbReference type="PROSITE" id="PS50297">
    <property type="entry name" value="ANK_REP_REGION"/>
    <property type="match status" value="1"/>
</dbReference>
<dbReference type="PROSITE" id="PS50088">
    <property type="entry name" value="ANK_REPEAT"/>
    <property type="match status" value="4"/>
</dbReference>
<dbReference type="PROSITE" id="PS50106">
    <property type="entry name" value="PDZ"/>
    <property type="match status" value="1"/>
</dbReference>
<dbReference type="PROSITE" id="PS50105">
    <property type="entry name" value="SAM_DOMAIN"/>
    <property type="match status" value="1"/>
</dbReference>
<dbReference type="PROSITE" id="PS50002">
    <property type="entry name" value="SH3"/>
    <property type="match status" value="1"/>
</dbReference>
<feature type="chain" id="PRO_0000174676" description="SH3 and multiple ankyrin repeat domains protein 3">
    <location>
        <begin position="1"/>
        <end position="1740"/>
    </location>
</feature>
<feature type="repeat" description="ANK 1">
    <location>
        <begin position="148"/>
        <end position="181"/>
    </location>
</feature>
<feature type="repeat" description="ANK 2">
    <location>
        <begin position="182"/>
        <end position="214"/>
    </location>
</feature>
<feature type="repeat" description="ANK 3">
    <location>
        <begin position="215"/>
        <end position="245"/>
    </location>
</feature>
<feature type="repeat" description="ANK 4">
    <location>
        <begin position="249"/>
        <end position="278"/>
    </location>
</feature>
<feature type="repeat" description="ANK 5">
    <location>
        <begin position="282"/>
        <end position="311"/>
    </location>
</feature>
<feature type="repeat" description="ANK 6">
    <location>
        <begin position="315"/>
        <end position="345"/>
    </location>
</feature>
<feature type="domain" description="SH3" evidence="6">
    <location>
        <begin position="470"/>
        <end position="529"/>
    </location>
</feature>
<feature type="domain" description="PDZ" evidence="4">
    <location>
        <begin position="570"/>
        <end position="664"/>
    </location>
</feature>
<feature type="domain" description="SAM" evidence="5">
    <location>
        <begin position="1677"/>
        <end position="1740"/>
    </location>
</feature>
<feature type="region of interest" description="Intramolecular interaction with the ANK repeats">
    <location>
        <begin position="1"/>
        <end position="75"/>
    </location>
</feature>
<feature type="region of interest" description="Disordered" evidence="7">
    <location>
        <begin position="354"/>
        <end position="466"/>
    </location>
</feature>
<feature type="region of interest" description="Disordered" evidence="7">
    <location>
        <begin position="664"/>
        <end position="687"/>
    </location>
</feature>
<feature type="region of interest" description="Required for interaction with ABI1" evidence="13">
    <location>
        <begin position="677"/>
        <end position="684"/>
    </location>
</feature>
<feature type="region of interest" description="Disordered" evidence="7">
    <location>
        <begin position="759"/>
        <end position="855"/>
    </location>
</feature>
<feature type="region of interest" description="Disordered" evidence="7">
    <location>
        <begin position="868"/>
        <end position="1053"/>
    </location>
</feature>
<feature type="region of interest" description="Disordered" evidence="7">
    <location>
        <begin position="1115"/>
        <end position="1199"/>
    </location>
</feature>
<feature type="region of interest" description="Disordered" evidence="7">
    <location>
        <begin position="1211"/>
        <end position="1463"/>
    </location>
</feature>
<feature type="region of interest" description="Disordered" evidence="7">
    <location>
        <begin position="1476"/>
        <end position="1518"/>
    </location>
</feature>
<feature type="region of interest" description="Disordered" evidence="7">
    <location>
        <begin position="1556"/>
        <end position="1594"/>
    </location>
</feature>
<feature type="region of interest" description="Disordered" evidence="7">
    <location>
        <begin position="1637"/>
        <end position="1673"/>
    </location>
</feature>
<feature type="coiled-coil region" evidence="3">
    <location>
        <begin position="1495"/>
        <end position="1515"/>
    </location>
</feature>
<feature type="short sequence motif" description="SH3-binding" evidence="3">
    <location>
        <begin position="1411"/>
        <end position="1417"/>
    </location>
</feature>
<feature type="compositionally biased region" description="Basic and acidic residues" evidence="7">
    <location>
        <begin position="404"/>
        <end position="415"/>
    </location>
</feature>
<feature type="compositionally biased region" description="Pro residues" evidence="7">
    <location>
        <begin position="444"/>
        <end position="460"/>
    </location>
</feature>
<feature type="compositionally biased region" description="Pro residues" evidence="7">
    <location>
        <begin position="812"/>
        <end position="845"/>
    </location>
</feature>
<feature type="compositionally biased region" description="Basic and acidic residues" evidence="7">
    <location>
        <begin position="1017"/>
        <end position="1027"/>
    </location>
</feature>
<feature type="compositionally biased region" description="Polar residues" evidence="7">
    <location>
        <begin position="1123"/>
        <end position="1132"/>
    </location>
</feature>
<feature type="compositionally biased region" description="Basic and acidic residues" evidence="7">
    <location>
        <begin position="1175"/>
        <end position="1195"/>
    </location>
</feature>
<feature type="compositionally biased region" description="Pro residues" evidence="7">
    <location>
        <begin position="1252"/>
        <end position="1262"/>
    </location>
</feature>
<feature type="compositionally biased region" description="Pro residues" evidence="7">
    <location>
        <begin position="1322"/>
        <end position="1334"/>
    </location>
</feature>
<feature type="compositionally biased region" description="Low complexity" evidence="7">
    <location>
        <begin position="1335"/>
        <end position="1344"/>
    </location>
</feature>
<feature type="compositionally biased region" description="Basic and acidic residues" evidence="7">
    <location>
        <begin position="1361"/>
        <end position="1371"/>
    </location>
</feature>
<feature type="compositionally biased region" description="Low complexity" evidence="7">
    <location>
        <begin position="1372"/>
        <end position="1393"/>
    </location>
</feature>
<feature type="compositionally biased region" description="Polar residues" evidence="7">
    <location>
        <begin position="1496"/>
        <end position="1506"/>
    </location>
</feature>
<feature type="compositionally biased region" description="Low complexity" evidence="7">
    <location>
        <begin position="1637"/>
        <end position="1647"/>
    </location>
</feature>
<feature type="compositionally biased region" description="Pro residues" evidence="7">
    <location>
        <begin position="1648"/>
        <end position="1658"/>
    </location>
</feature>
<feature type="compositionally biased region" description="Low complexity" evidence="7">
    <location>
        <begin position="1659"/>
        <end position="1668"/>
    </location>
</feature>
<feature type="modified residue" description="Phosphotyrosine" evidence="1">
    <location>
        <position position="122"/>
    </location>
</feature>
<feature type="modified residue" description="Phosphoserine" evidence="1">
    <location>
        <position position="373"/>
    </location>
</feature>
<feature type="modified residue" description="Phosphoserine" evidence="22">
    <location>
        <position position="375"/>
    </location>
</feature>
<feature type="modified residue" description="Phosphoserine" evidence="22">
    <location>
        <position position="387"/>
    </location>
</feature>
<feature type="modified residue" description="Phosphoserine" evidence="22">
    <location>
        <position position="394"/>
    </location>
</feature>
<feature type="modified residue" description="Phosphoserine" evidence="1">
    <location>
        <position position="482"/>
    </location>
</feature>
<feature type="modified residue" description="Phosphotyrosine" evidence="1">
    <location>
        <position position="555"/>
    </location>
</feature>
<feature type="modified residue" description="Phosphoserine" evidence="1">
    <location>
        <position position="694"/>
    </location>
</feature>
<feature type="modified residue" description="Phosphoserine" evidence="1">
    <location>
        <position position="781"/>
    </location>
</feature>
<feature type="modified residue" description="Phosphoserine" evidence="1">
    <location>
        <position position="790"/>
    </location>
</feature>
<feature type="modified residue" description="Phosphoserine" evidence="1">
    <location>
        <position position="801"/>
    </location>
</feature>
<feature type="modified residue" description="Phosphoserine" evidence="1">
    <location>
        <position position="891"/>
    </location>
</feature>
<feature type="modified residue" description="Phosphoserine" evidence="1">
    <location>
        <position position="898"/>
    </location>
</feature>
<feature type="modified residue" description="Phosphothreonine" evidence="2">
    <location>
        <position position="913"/>
    </location>
</feature>
<feature type="modified residue" description="Phosphotyrosine" evidence="22">
    <location>
        <position position="931"/>
    </location>
</feature>
<feature type="modified residue" description="Asymmetric dimethylarginine" evidence="1">
    <location>
        <position position="966"/>
    </location>
</feature>
<feature type="modified residue" description="Phosphothreonine" evidence="22">
    <location>
        <position position="1131"/>
    </location>
</feature>
<feature type="modified residue" description="Phosphoserine" evidence="22">
    <location>
        <position position="1135"/>
    </location>
</feature>
<feature type="modified residue" description="Phosphoserine" evidence="22">
    <location>
        <position position="1160"/>
    </location>
</feature>
<feature type="modified residue" description="Phosphoserine" evidence="2">
    <location>
        <position position="1164"/>
    </location>
</feature>
<feature type="modified residue" description="Phosphoserine" evidence="22">
    <location>
        <position position="1167"/>
    </location>
</feature>
<feature type="modified residue" description="Phosphothreonine" evidence="22">
    <location>
        <position position="1235"/>
    </location>
</feature>
<feature type="modified residue" description="Phosphoserine" evidence="22">
    <location>
        <position position="1254"/>
    </location>
</feature>
<feature type="modified residue" description="Phosphoserine" evidence="22">
    <location>
        <position position="1421"/>
    </location>
</feature>
<feature type="modified residue" description="Phosphoserine" evidence="22">
    <location>
        <position position="1511"/>
    </location>
</feature>
<feature type="modified residue" description="Phosphoserine" evidence="1">
    <location>
        <position position="1522"/>
    </location>
</feature>
<feature type="modified residue" description="Phosphoserine" evidence="1">
    <location>
        <position position="1530"/>
    </location>
</feature>
<feature type="modified residue" description="Phosphoserine" evidence="1">
    <location>
        <position position="1549"/>
    </location>
</feature>
<feature type="modified residue" description="Phosphoserine" evidence="22">
    <location>
        <position position="1644"/>
    </location>
</feature>
<feature type="modified residue" description="Phosphoserine" evidence="2">
    <location>
        <position position="1646"/>
    </location>
</feature>
<feature type="modified residue" description="Phosphoserine" evidence="2">
    <location>
        <position position="1648"/>
    </location>
</feature>
<feature type="splice variant" id="VSP_006087" description="In isoform 3." evidence="21">
    <original>SPTPVHSP</original>
    <variation>PRRRAGMV</variation>
    <location>
        <begin position="1129"/>
        <end position="1136"/>
    </location>
</feature>
<feature type="splice variant" id="VSP_006088" description="In isoform 3." evidence="21">
    <location>
        <begin position="1137"/>
        <end position="1740"/>
    </location>
</feature>
<feature type="splice variant" id="VSP_006089" description="In isoform 1." evidence="19 20">
    <location>
        <begin position="1537"/>
        <end position="1545"/>
    </location>
</feature>
<feature type="mutagenesis site" description="Disrupts postsynaptic AMPA and NMDA receptor-mediated synaptic transmission as well as transsynaptic signaling and spine maturation." evidence="14 16">
    <original>R</original>
    <variation>C</variation>
    <location>
        <position position="12"/>
    </location>
</feature>
<feature type="mutagenesis site" description="Slightly increases interaction with SHARPIN and SPTAN1. No effect on localization." evidence="17">
    <original>L</original>
    <variation>P</variation>
    <location>
        <position position="68"/>
    </location>
</feature>
<feature type="mutagenesis site" description="Disrupts postsynaptic AMPA and NMDA receptor-mediated synaptic transmission as well as transsynaptic signaling and spine maturation. Slightly decreases interaction with SHARPIN and SPTAN1. No effect on localization." evidence="14 16 17">
    <original>R</original>
    <variation>C</variation>
    <location>
        <position position="300"/>
    </location>
</feature>
<feature type="mutagenesis site" description="Disrupts postsynaptic AMPA and NMDA receptor-mediated synaptic transmission as well as transsynaptic signaling and spine maturation. Disrupts axonal growth cone motility. Slightly increases interaction with SHARPIN and SPTAN1. No effect on localization." evidence="14 16 17">
    <original>Q</original>
    <variation>R</variation>
    <location>
        <position position="321"/>
    </location>
</feature>
<feature type="mutagenesis site" description="Strongly decreases interaction with ABI1." evidence="13">
    <original>P</original>
    <variation>A</variation>
    <location>
        <position position="677"/>
    </location>
</feature>
<feature type="mutagenesis site" description="Almost abolishes interaction with ABI1." evidence="13">
    <original>P</original>
    <variation>A</variation>
    <location>
        <position position="678"/>
    </location>
</feature>
<feature type="mutagenesis site" description="Abolishes interaction with ABI1." evidence="13">
    <original>P</original>
    <variation>A</variation>
    <location>
        <position position="679"/>
    </location>
</feature>
<feature type="mutagenesis site" description="Abolishes interaction with ABI1." evidence="13">
    <original>P</original>
    <variation>A</variation>
    <location>
        <position position="680"/>
    </location>
</feature>
<feature type="mutagenesis site" description="Abolishes interaction with ABI1." evidence="13">
    <original>P</original>
    <variation>A</variation>
    <location>
        <position position="684"/>
    </location>
</feature>
<feature type="mutagenesis site" description="Abolishes interaction with HOMER1 isoform 3." evidence="9">
    <original>P</original>
    <variation>L</variation>
    <location>
        <position position="1311"/>
    </location>
</feature>
<feature type="mutagenesis site" description="Abolishes interaction with HOMER1 isoform 3." evidence="9">
    <original>F</original>
    <variation>C</variation>
    <location>
        <position position="1314"/>
    </location>
</feature>
<feature type="sequence conflict" description="In Ref. 3; AAD42976." evidence="21" ref="3">
    <original>H</original>
    <variation>L</variation>
    <location>
        <position position="397"/>
    </location>
</feature>
<feature type="sequence conflict" description="In Ref. 3; AAD42976." evidence="21" ref="3">
    <original>R</original>
    <variation>G</variation>
    <location>
        <position position="706"/>
    </location>
</feature>
<feature type="sequence conflict" description="In Ref. 3; AAD42976." evidence="21" ref="3">
    <original>YYFDSG</original>
    <variation>ILRLR</variation>
    <location>
        <begin position="827"/>
        <end position="832"/>
    </location>
</feature>
<feature type="sequence conflict" description="In Ref. 3; AAD42976." evidence="21" ref="3">
    <original>FSPPPP</original>
    <variation>SHHGHQ</variation>
    <location>
        <begin position="837"/>
        <end position="842"/>
    </location>
</feature>
<feature type="sequence conflict" description="In Ref. 3; AAD42976." evidence="21" ref="3">
    <original>R</original>
    <variation>G</variation>
    <location>
        <position position="846"/>
    </location>
</feature>
<feature type="sequence conflict" description="In Ref. 3; AAD42976." evidence="21" ref="3">
    <original>R</original>
    <variation>G</variation>
    <location>
        <position position="888"/>
    </location>
</feature>
<feature type="sequence conflict" description="In Ref. 2; AAF61375." evidence="21" ref="2">
    <original>S</original>
    <variation>N</variation>
    <location>
        <position position="1040"/>
    </location>
</feature>
<feature type="sequence conflict" description="In Ref. 2; AAF61375." evidence="21" ref="2">
    <original>S</original>
    <variation>N</variation>
    <location>
        <position position="1087"/>
    </location>
</feature>
<feature type="sequence conflict" description="In Ref. 2; AAF61375." evidence="21" ref="2">
    <original>G</original>
    <variation>S</variation>
    <location>
        <position position="1092"/>
    </location>
</feature>
<feature type="sequence conflict" description="In Ref. 2; AAF61375." evidence="21" ref="2">
    <original>S</original>
    <variation>N</variation>
    <location>
        <position position="1262"/>
    </location>
</feature>
<feature type="sequence conflict" description="In Ref. 2; AAF61375." evidence="21" ref="2">
    <original>G</original>
    <variation>S</variation>
    <location>
        <position position="1270"/>
    </location>
</feature>
<feature type="sequence conflict" description="In Ref. 2; AAF61375." evidence="21" ref="2">
    <original>S</original>
    <variation>N</variation>
    <location>
        <position position="1273"/>
    </location>
</feature>
<feature type="sequence conflict" description="In Ref. 2; AAF61375." evidence="21" ref="2">
    <original>E</original>
    <variation>K</variation>
    <location>
        <position position="1279"/>
    </location>
</feature>
<feature type="sequence conflict" description="In Ref. 2; AAF61375." evidence="21" ref="2">
    <original>S</original>
    <variation>N</variation>
    <location>
        <position position="1294"/>
    </location>
</feature>
<feature type="sequence conflict" description="In Ref. 2; AAF61375." evidence="21" ref="2">
    <original>D</original>
    <variation>G</variation>
    <location>
        <position position="1432"/>
    </location>
</feature>
<feature type="sequence conflict" description="In Ref. 2; AAF61375." evidence="21" ref="2">
    <original>V</original>
    <variation>A</variation>
    <location>
        <position position="1640"/>
    </location>
</feature>
<feature type="strand" evidence="24">
    <location>
        <begin position="9"/>
        <end position="15"/>
    </location>
</feature>
<feature type="helix" evidence="24">
    <location>
        <begin position="16"/>
        <end position="18"/>
    </location>
</feature>
<feature type="strand" evidence="24">
    <location>
        <begin position="20"/>
        <end position="26"/>
    </location>
</feature>
<feature type="helix" evidence="24">
    <location>
        <begin position="32"/>
        <end position="43"/>
    </location>
</feature>
<feature type="helix" evidence="24">
    <location>
        <begin position="50"/>
        <end position="52"/>
    </location>
</feature>
<feature type="strand" evidence="24">
    <location>
        <begin position="53"/>
        <end position="57"/>
    </location>
</feature>
<feature type="helix" evidence="24">
    <location>
        <begin position="74"/>
        <end position="76"/>
    </location>
</feature>
<feature type="strand" evidence="24">
    <location>
        <begin position="87"/>
        <end position="92"/>
    </location>
</feature>
<feature type="helix" evidence="24">
    <location>
        <begin position="104"/>
        <end position="110"/>
    </location>
</feature>
<feature type="helix" evidence="24">
    <location>
        <begin position="113"/>
        <end position="124"/>
    </location>
</feature>
<feature type="helix" evidence="24">
    <location>
        <begin position="128"/>
        <end position="136"/>
    </location>
</feature>
<feature type="turn" evidence="24">
    <location>
        <begin position="146"/>
        <end position="148"/>
    </location>
</feature>
<feature type="helix" evidence="24">
    <location>
        <begin position="152"/>
        <end position="156"/>
    </location>
</feature>
<feature type="helix" evidence="24">
    <location>
        <begin position="163"/>
        <end position="171"/>
    </location>
</feature>
<feature type="helix" evidence="24">
    <location>
        <begin position="186"/>
        <end position="192"/>
    </location>
</feature>
<feature type="helix" evidence="24">
    <location>
        <begin position="196"/>
        <end position="204"/>
    </location>
</feature>
<feature type="helix" evidence="24">
    <location>
        <begin position="219"/>
        <end position="226"/>
    </location>
</feature>
<feature type="helix" evidence="24">
    <location>
        <begin position="231"/>
        <end position="238"/>
    </location>
</feature>
<feature type="helix" evidence="24">
    <location>
        <begin position="253"/>
        <end position="260"/>
    </location>
</feature>
<feature type="helix" evidence="24">
    <location>
        <begin position="263"/>
        <end position="271"/>
    </location>
</feature>
<feature type="helix" evidence="24">
    <location>
        <begin position="286"/>
        <end position="293"/>
    </location>
</feature>
<feature type="helix" evidence="24">
    <location>
        <begin position="296"/>
        <end position="304"/>
    </location>
</feature>
<feature type="helix" evidence="24">
    <location>
        <begin position="319"/>
        <end position="325"/>
    </location>
</feature>
<feature type="helix" evidence="24">
    <location>
        <begin position="329"/>
        <end position="337"/>
    </location>
</feature>
<feature type="strand" evidence="25">
    <location>
        <begin position="474"/>
        <end position="479"/>
    </location>
</feature>
<feature type="strand" evidence="25">
    <location>
        <begin position="496"/>
        <end position="502"/>
    </location>
</feature>
<feature type="strand" evidence="25">
    <location>
        <begin position="507"/>
        <end position="512"/>
    </location>
</feature>
<feature type="strand" evidence="25">
    <location>
        <begin position="515"/>
        <end position="520"/>
    </location>
</feature>
<feature type="helix" evidence="25">
    <location>
        <begin position="521"/>
        <end position="523"/>
    </location>
</feature>
<feature type="strand" evidence="25">
    <location>
        <begin position="524"/>
        <end position="526"/>
    </location>
</feature>
<feature type="strand" evidence="27">
    <location>
        <begin position="570"/>
        <end position="574"/>
    </location>
</feature>
<feature type="strand" evidence="27">
    <location>
        <begin position="582"/>
        <end position="587"/>
    </location>
</feature>
<feature type="helix" evidence="27">
    <location>
        <begin position="594"/>
        <end position="596"/>
    </location>
</feature>
<feature type="strand" evidence="26">
    <location>
        <begin position="601"/>
        <end position="603"/>
    </location>
</feature>
<feature type="strand" evidence="27">
    <location>
        <begin position="605"/>
        <end position="612"/>
    </location>
</feature>
<feature type="helix" evidence="27">
    <location>
        <begin position="617"/>
        <end position="620"/>
    </location>
</feature>
<feature type="strand" evidence="27">
    <location>
        <begin position="628"/>
        <end position="632"/>
    </location>
</feature>
<feature type="helix" evidence="27">
    <location>
        <begin position="642"/>
        <end position="651"/>
    </location>
</feature>
<feature type="turn" evidence="27">
    <location>
        <begin position="652"/>
        <end position="654"/>
    </location>
</feature>
<feature type="strand" evidence="27">
    <location>
        <begin position="655"/>
        <end position="662"/>
    </location>
</feature>
<feature type="helix" evidence="23">
    <location>
        <begin position="1674"/>
        <end position="1676"/>
    </location>
</feature>
<feature type="helix" evidence="23">
    <location>
        <begin position="1679"/>
        <end position="1688"/>
    </location>
</feature>
<feature type="helix" evidence="23">
    <location>
        <begin position="1692"/>
        <end position="1694"/>
    </location>
</feature>
<feature type="helix" evidence="23">
    <location>
        <begin position="1695"/>
        <end position="1700"/>
    </location>
</feature>
<feature type="helix" evidence="23">
    <location>
        <begin position="1705"/>
        <end position="1710"/>
    </location>
</feature>
<feature type="helix" evidence="23">
    <location>
        <begin position="1713"/>
        <end position="1718"/>
    </location>
</feature>
<feature type="helix" evidence="23">
    <location>
        <begin position="1724"/>
        <end position="1735"/>
    </location>
</feature>
<keyword id="KW-0002">3D-structure</keyword>
<keyword id="KW-0009">Actin-binding</keyword>
<keyword id="KW-0877">Alternative promoter usage</keyword>
<keyword id="KW-0025">Alternative splicing</keyword>
<keyword id="KW-0040">ANK repeat</keyword>
<keyword id="KW-0966">Cell projection</keyword>
<keyword id="KW-0175">Coiled coil</keyword>
<keyword id="KW-0963">Cytoplasm</keyword>
<keyword id="KW-0488">Methylation</keyword>
<keyword id="KW-0597">Phosphoprotein</keyword>
<keyword id="KW-1185">Reference proteome</keyword>
<keyword id="KW-0677">Repeat</keyword>
<keyword id="KW-0728">SH3 domain</keyword>
<keyword id="KW-0729">SH3-binding</keyword>
<keyword id="KW-0770">Synapse</keyword>
<sequence>MDGPGASAVVVRVGIPDLQQTKCLRLDPTAPVWAAKQRVLCALNHSLQDALNYGLFQPPSRGRAGKFLDEERLLQDYPPNLDTPLPYLEFRYKRRVYAQNLIDDKQFAKLHTKANLKKFMDYVQLHSTDKVARLLDKGLDPNFHDPDSGECPLSLAAQLDNATDLLKVLRNGGAHLDFRTRDGLTAVHCATRQRNAGALTTLLDLGASPDYKDSRGLTPLYHSALGGGDALCCELLLHDHAQLGTTDENGWQEIHQACRFGHVQHLEHLLFYGANMGAQNASGNTALHICALYNQESCARVLLFRGANKDVRNYNSQTAFQVAIIAGNFELAEVIKTHKDSDVVPFRETPSYAKRRRLAGPSGLASPRPLQRSASDINLKGDQPAASPGPTLRSLPHQLLLQRLQEEKDRDRDGEQENDISGPSAGRGGHSKISPSGPGGSGPAPGPGPASPAPPAPPPRGPKRKLYSAVPGRKFIAVKAHSPQGEGEIPLHRGEAVKVLSIGEGGFWEGTVKGRTGWFPADCVEEVQMRQYDTRHETREDRTKRLFRHYTVGSYDSLTSHSDYVIDDKVAILQKRDHEGFGFVLRGAKAETPIEEFTPTPAFPALQYLESVDVEGVAWKAGLRTGDFLIEVNGVNVVKVGHKQVVGLIRQGGNRLVMKVVSVTRKPEEDSARRRAPPPPKRAPSTTLTLRSKSMTAELEELASIRRRKGEKLDEILAVAAEPTLRPDIADADSRAATVKQRPTSRRITPAEISSLFERQGLPGPEKLPGSLRKGIPRTKSVGEDEKLASLLEGRFPRSTSMQDTVREGRGIPPPPQTAPPPPPAPYYFDSGPPPTFSPPPPPPGRAYDTVRSSFKPGLEARLGAGAAGLYDSGTPLGPLPYPERQKRARSMIILQDSAPEVGDVPRPAPAATPPERPKRRPRPSGPDSPYANLGAFSASLFAPSKPQRRKSPLVKQLQVEDAQERAALAVGSPGPVGGSFAREPSPTHRGPRPGGLDYSSGEGLGLTFGGPSPGPVKERRLEERRRSTVFLSVGAIEGSPPSADLPSLQPSRSIDERLLGTGATTGRDLLLPSPVSALKPLVGGPSLGPSGSTFIHPLTGKPLDPSSPLALALAARERALASQTPSRSPTPVHSPDADRPGPLFVDVQTRDSERGPLASPAFSPRSPAWIPVPARREAEKPTREERKSPEDKKSMILSVLDTSLQRPAGLIVVHATSNGQEPNRLGAEEERPGTPELAPTPMQAAAVAEPMPSPRAQPPGSIPADPGPGQGSSEEEPELVFAVNLPPAQLSSSDEETREELARIGLVPPPEEFANGILLATPPPGPGPLPTTVPSPASGKPSSELPPAPESAADSGVEEADTRSSSDPHLETTSTISTVSSMSTLSSESGELTDTHTSFADGHTFLLEKPPVPPKPKLKSPLGKGPVTFRDPLLKQSSDSELMAQQHHATSTGLTSAAGPARPRYLFQRRSKLWGDPVESRGLPGPEDDKPTVISELSSRLQQLNKDTRSLGEEPVGGLGSLLDPAKKSPIAAARCAVVPSAGWLFSSLGELSTISAQRSPGGPGGGASYSVRPSGRYPVARRAPSPVKPASLERVEGLGAGVGGAGRPFGLTPPTILKSSSLSIPHEPKEVRFVVRSVSARSRSPSPSPLPSPSPGSGPSAGPRRPFQQKPLQLWSKFDVGDWLESIHLGEHRDRFEDHEIEGAHLPALTKEDFVELGVTRVGHRMNIERALRQLDGS</sequence>
<gene>
    <name type="primary">Shank3</name>
    <name type="synonym">Prosap2</name>
</gene>
<accession>Q9JLU4</accession>
<accession>Q9WUY7</accession>
<accession>Q9WV47</accession>
<evidence type="ECO:0000250" key="1">
    <source>
        <dbReference type="UniProtKB" id="Q4ACU6"/>
    </source>
</evidence>
<evidence type="ECO:0000250" key="2">
    <source>
        <dbReference type="UniProtKB" id="Q9BYB0"/>
    </source>
</evidence>
<evidence type="ECO:0000255" key="3"/>
<evidence type="ECO:0000255" key="4">
    <source>
        <dbReference type="PROSITE-ProRule" id="PRU00143"/>
    </source>
</evidence>
<evidence type="ECO:0000255" key="5">
    <source>
        <dbReference type="PROSITE-ProRule" id="PRU00184"/>
    </source>
</evidence>
<evidence type="ECO:0000255" key="6">
    <source>
        <dbReference type="PROSITE-ProRule" id="PRU00192"/>
    </source>
</evidence>
<evidence type="ECO:0000256" key="7">
    <source>
        <dbReference type="SAM" id="MobiDB-lite"/>
    </source>
</evidence>
<evidence type="ECO:0000269" key="8">
    <source>
    </source>
</evidence>
<evidence type="ECO:0000269" key="9">
    <source>
    </source>
</evidence>
<evidence type="ECO:0000269" key="10">
    <source>
    </source>
</evidence>
<evidence type="ECO:0000269" key="11">
    <source>
    </source>
</evidence>
<evidence type="ECO:0000269" key="12">
    <source>
    </source>
</evidence>
<evidence type="ECO:0000269" key="13">
    <source>
    </source>
</evidence>
<evidence type="ECO:0000269" key="14">
    <source>
    </source>
</evidence>
<evidence type="ECO:0000269" key="15">
    <source>
    </source>
</evidence>
<evidence type="ECO:0000269" key="16">
    <source>
    </source>
</evidence>
<evidence type="ECO:0000269" key="17">
    <source>
    </source>
</evidence>
<evidence type="ECO:0000269" key="18">
    <source>
    </source>
</evidence>
<evidence type="ECO:0000303" key="19">
    <source>
    </source>
</evidence>
<evidence type="ECO:0000303" key="20">
    <source>
    </source>
</evidence>
<evidence type="ECO:0000305" key="21"/>
<evidence type="ECO:0007744" key="22">
    <source>
    </source>
</evidence>
<evidence type="ECO:0007829" key="23">
    <source>
        <dbReference type="PDB" id="2F3N"/>
    </source>
</evidence>
<evidence type="ECO:0007829" key="24">
    <source>
        <dbReference type="PDB" id="5G4X"/>
    </source>
</evidence>
<evidence type="ECO:0007829" key="25">
    <source>
        <dbReference type="PDB" id="5O99"/>
    </source>
</evidence>
<evidence type="ECO:0007829" key="26">
    <source>
        <dbReference type="PDB" id="5OVA"/>
    </source>
</evidence>
<evidence type="ECO:0007829" key="27">
    <source>
        <dbReference type="PDB" id="5OVV"/>
    </source>
</evidence>
<name>SHAN3_RAT</name>
<comment type="function">
    <text evidence="14 15 16 17 18">Major scaffold postsynaptic density protein which interacts with multiple proteins and complexes to orchestrate the dendritic spine and synapse formation, maturation and maintenance. Interconnects receptors of the postsynaptic membrane including NMDA-type and metabotropic glutamate receptors via complexes with GKAP/PSD-95 and HOMER, respectively, and the actin-based cytoskeleton. Plays a role in the structural and functional organization of the dendritic spine and synaptic junction through the interaction with Arp2/3 and WAVE1 complex as well as the promotion of the F-actin clusters. By way of this control of actin dynamics, participates in the regulation of developing neurons growth cone motility and the NMDA receptor-signaling. Also modulates GRIA1 exocytosis and GRM5/MGLUR5 expression and signaling to control the AMPA and metabotropic glutamate receptor-mediated synaptic transmission and plasticity. May be required at an early stage of synapse formation and be inhibited by IGF1 to promote synapse maturation.</text>
</comment>
<comment type="subunit">
    <text evidence="1 2 8 9 10 11 12 13 17">May homomultimerize via its SAM domain. Interacts with BAIAP2, DBNL and SLC17A7/VGLUT1. Interacts with DLGAP1/GKAP, GRM1/MGLUR1, GRM5/MGLUR5 and LZTS3 C-termini via its PDZ domain. Interacts with ABI1, HOMER1, HOMER2, HOMER3 and CTTN/cortactin SH3 domain. Is part of a complex with DLG4/PSD-95 and DLGAP1/GKAP. Interacts (via PDZ domain) with the GRIA1 subunit of the AMPA receptor (via PDZ-binding motif). Interacts with WASF1 and CYFIP2; the interactions mediate the association of SHANK3 with the WAVE1 complex. Interacts with ARPC2; the interaction probably mediates the association of SHANK3 with the Arp2/3 complex. Interacts (via ANK repeats) with SHARPIN and SPTAN1. Interacts (via PDZ domain) with ARHGAP44 (probably via PDZ-binding motif); the interaction takes place in dendritic spines and promotes GRIA1 exocytosis. Interacts with CAMK2A (By similarity). Interacts with DIP2A (By similarity). Interacts with ADGRL3 (By similarity).</text>
</comment>
<comment type="interaction">
    <interactant intactId="EBI-6271152">
        <id>Q9JLU4</id>
    </interactant>
    <interactant intactId="EBI-920097">
        <id>Q9QZM5</id>
        <label>Abi1</label>
    </interactant>
    <organismsDiffer>false</organismsDiffer>
    <experiments>7</experiments>
</comment>
<comment type="interaction">
    <interactant intactId="EBI-6271152">
        <id>Q9JLU4</id>
    </interactant>
    <interactant intactId="EBI-6271152">
        <id>Q9JLU4</id>
        <label>Shank3</label>
    </interactant>
    <organismsDiffer>false</organismsDiffer>
    <experiments>2</experiments>
</comment>
<comment type="interaction">
    <interactant intactId="EBI-6271152">
        <id>Q9JLU4</id>
    </interactant>
    <interactant intactId="EBI-8620514">
        <id>Q9ES28-2</id>
        <label>Arhgef7</label>
    </interactant>
    <organismsDiffer>true</organismsDiffer>
    <experiments>2</experiments>
</comment>
<comment type="subcellular location">
    <subcellularLocation>
        <location>Cytoplasm</location>
    </subcellularLocation>
    <subcellularLocation>
        <location>Postsynaptic density</location>
    </subcellularLocation>
    <subcellularLocation>
        <location>Cell projection</location>
        <location>Dendritic spine</location>
    </subcellularLocation>
    <text>In neuronal cells, extends into the region subjacent to the PSD.</text>
</comment>
<comment type="alternative products">
    <event type="alternative promoter"/>
    <event type="alternative splicing"/>
    <isoform>
        <id>Q9JLU4-1</id>
        <name>2</name>
        <sequence type="displayed"/>
    </isoform>
    <isoform>
        <id>Q9JLU4-2</id>
        <name>1</name>
        <name>A</name>
        <sequence type="described" ref="VSP_006089"/>
    </isoform>
    <isoform>
        <id>Q9JLU4-3</id>
        <name>3</name>
        <sequence type="described" ref="VSP_006087 VSP_006088"/>
    </isoform>
    <text>Additional isoforms seem to exist. These isoforms may be the product of multiple intragenic promoter and/or alternative splicing.</text>
</comment>
<comment type="tissue specificity">
    <text evidence="10 11 12 13 15">Widely expressed in brain (at protein level).</text>
</comment>
<comment type="domain">
    <text evidence="17">In isoform 1, the N-terminal region preceding the ANK repeats interacts with the 6 ANK repeats in an intramolecular manner, thereby restricting access to ligands, such as SHARPIN and SPTAN1.</text>
</comment>
<comment type="similarity">
    <text evidence="21">Belongs to the SHANK family.</text>
</comment>
<comment type="sequence caution" evidence="21">
    <conflict type="frameshift">
        <sequence resource="EMBL-CDS" id="AAD42976"/>
    </conflict>
</comment>
<reference key="1">
    <citation type="journal article" date="1999" name="Biochem. Biophys. Res. Commun.">
        <title>Proline-rich synapse-associated proteins ProSAP1 and ProSAP2 interact with synaptic proteins of the SAPAP/GKAP family.</title>
        <authorList>
            <person name="Boeckers T.M."/>
            <person name="Winter C."/>
            <person name="Smalla K.-H."/>
            <person name="Kreutz M.R."/>
            <person name="Bockmann J."/>
            <person name="Seidenbecher C."/>
            <person name="Garner C.C."/>
            <person name="Gundelfinger E.D."/>
        </authorList>
    </citation>
    <scope>NUCLEOTIDE SEQUENCE [MRNA] (ISOFORM 1)</scope>
    <scope>INTERACTION WITH DLGAP1 AND DLG4</scope>
    <scope>TISSUE SPECIFICITY</scope>
</reference>
<reference key="2">
    <citation type="journal article" date="1999" name="Neuron">
        <title>Shank, a novel family of postsynaptic density proteins that binds to the NMDA receptor/PSD-95/GKAP complex and cortactin.</title>
        <authorList>
            <person name="Naisbitt S."/>
            <person name="Kim E."/>
            <person name="Tu J.C."/>
            <person name="Xiao B."/>
            <person name="Sala C."/>
            <person name="Valtschanoff J."/>
            <person name="Weinberg R.J."/>
            <person name="Worley P.F."/>
            <person name="Sheng M."/>
        </authorList>
    </citation>
    <scope>NUCLEOTIDE SEQUENCE [MRNA] (ISOFORM 1)</scope>
    <scope>INTERACTION WITH DLGAP1 AND CTTN</scope>
    <scope>OLIGOMERIZATION</scope>
    <source>
        <strain>Sprague-Dawley</strain>
        <tissue>Hippocampus</tissue>
    </source>
</reference>
<reference key="3">
    <citation type="journal article" date="2000" name="J. Biol. Chem.">
        <title>The G protein-coupled receptor CL1 interacts directly with proteins of the Shank family.</title>
        <authorList>
            <person name="Tobaben S."/>
            <person name="Suedhof T.C."/>
            <person name="Stahl B."/>
        </authorList>
    </citation>
    <scope>PARTIAL NUCLEOTIDE SEQUENCE [MRNA] (ISOFORM 3)</scope>
    <source>
        <tissue>Brain</tissue>
    </source>
</reference>
<reference key="4">
    <citation type="journal article" date="1999" name="Neuron">
        <title>Coupling of mGluR/Homer and PSD-95 complexes by the Shank family of postsynaptic density proteins.</title>
        <authorList>
            <person name="Tu J.C."/>
            <person name="Xiao B."/>
            <person name="Naisbitt S."/>
            <person name="Yuan J.P."/>
            <person name="Petralia R.S."/>
            <person name="Brakeman P."/>
            <person name="Doan A."/>
            <person name="Aakalu V.K."/>
            <person name="Lanahan A.A."/>
            <person name="Sheng M."/>
            <person name="Worley P.F."/>
        </authorList>
    </citation>
    <scope>INTERACTION WITH HOMER1; HOMER2; HOMER3; DLGAP1; MGLUR1A AND MGLUR5</scope>
    <scope>MUTAGENESIS OF PRO-1311 AND PHE-1314</scope>
</reference>
<reference key="5">
    <citation type="journal article" date="2000" name="J. Cell Sci.">
        <title>The Shank family of scaffold proteins.</title>
        <authorList>
            <person name="Sheng M."/>
            <person name="Kim E."/>
        </authorList>
    </citation>
    <scope>REVIEW</scope>
</reference>
<reference key="6">
    <citation type="journal article" date="2004" name="J. Neurosci.">
        <title>Linkage of the actin cytoskeleton to the postsynaptic density via direct interactions of Abp1 with the ProSAP/Shank family.</title>
        <authorList>
            <person name="Qualmann B."/>
            <person name="Boeckers T.M."/>
            <person name="Jeromin M."/>
            <person name="Gundelfinger E.D."/>
            <person name="Kessels M.M."/>
        </authorList>
    </citation>
    <scope>INTERACTION WITH DBNL</scope>
    <scope>TISSUE SPECIFICITY</scope>
</reference>
<reference key="7">
    <citation type="journal article" date="2006" name="J. Biol. Chem.">
        <title>ProSAP-interacting protein 1 (ProSAPiP1), a novel protein of the postsynaptic density that links the spine-associated Rap-Gap (SPAR) to the scaffolding protein ProSAP2/Shank3.</title>
        <authorList>
            <person name="Wendholt D."/>
            <person name="Spilker C."/>
            <person name="Schmitt A."/>
            <person name="Dolnik A."/>
            <person name="Smalla K.H."/>
            <person name="Proepper C."/>
            <person name="Bockmann J."/>
            <person name="Sobue K."/>
            <person name="Gundelfinger E.D."/>
            <person name="Kreutz M.R."/>
            <person name="Boeckers T.M."/>
        </authorList>
    </citation>
    <scope>INTERACTION WITH LZTS3</scope>
    <scope>SUBCELLULAR LOCATION</scope>
    <scope>TISSUE SPECIFICITY</scope>
</reference>
<reference key="8">
    <citation type="journal article" date="2007" name="EMBO J.">
        <title>Abelson interacting protein 1 (Abi-1) is essential for dendrite morphogenesis and synapse formation.</title>
        <authorList>
            <person name="Proepper C."/>
            <person name="Johannsen S."/>
            <person name="Liebau S."/>
            <person name="Dahl J."/>
            <person name="Vaida B."/>
            <person name="Bockmann J."/>
            <person name="Kreutz M.R."/>
            <person name="Gundelfinger E.D."/>
            <person name="Boeckers T.M."/>
        </authorList>
    </citation>
    <scope>INTERACTION WITH ABI1</scope>
    <scope>SUBCELLULAR LOCATION</scope>
    <scope>TISSUE SPECIFICITY</scope>
    <scope>MUTAGENESIS OF PRO-677; PRO-678; PRO-679; PRO-680 AND PRO-684</scope>
</reference>
<reference key="9">
    <citation type="journal article" date="2011" name="J. Biol. Chem.">
        <title>Importance of Shank3 protein in regulating metabotropic glutamate receptor 5 (mGluR5) expression and signaling at synapses.</title>
        <authorList>
            <person name="Verpelli C."/>
            <person name="Dvoretskova E."/>
            <person name="Vicidomini C."/>
            <person name="Rossi F."/>
            <person name="Chiappalone M."/>
            <person name="Schoen M."/>
            <person name="Di Stefano B."/>
            <person name="Mantegazza R."/>
            <person name="Broccoli V."/>
            <person name="Boeckers T.M."/>
            <person name="Dityatev A."/>
            <person name="Sala C."/>
        </authorList>
    </citation>
    <scope>FUNCTION IN MGLUR5 SIGNALING REGULATION</scope>
    <scope>TISSUE SPECIFICITY</scope>
</reference>
<reference key="10">
    <citation type="journal article" date="2012" name="J. Neurosci.">
        <title>Autism-associated mutations in ProSAP2/Shank3 impair synaptic transmission and neurexin-neuroligin-mediated transsynaptic signaling.</title>
        <authorList>
            <person name="Arons M.H."/>
            <person name="Thynne C.J."/>
            <person name="Grabrucker A.M."/>
            <person name="Li D."/>
            <person name="Schoen M."/>
            <person name="Cheyne J.E."/>
            <person name="Boeckers T.M."/>
            <person name="Montgomery J.M."/>
            <person name="Garner C.C."/>
        </authorList>
    </citation>
    <scope>FUNCTION</scope>
    <scope>MUTAGENESIS OF ARG-12; ARG-300 AND GLN-321</scope>
</reference>
<reference key="11">
    <citation type="journal article" date="2012" name="Mol. Psychiatry">
        <title>SHANK3 mutations identified in autism lead to modification of dendritic spine morphology via an actin-dependent mechanism.</title>
        <authorList>
            <person name="Durand C.M."/>
            <person name="Perroy J."/>
            <person name="Loll F."/>
            <person name="Perrais D."/>
            <person name="Fagni L."/>
            <person name="Bourgeron T."/>
            <person name="Montcouquiol M."/>
            <person name="Sans N."/>
        </authorList>
    </citation>
    <scope>FUNCTION</scope>
    <scope>ACTIN-BINDING</scope>
    <scope>SUBCELLULAR LOCATION</scope>
    <scope>MUTAGENESIS OF ARG-12; ARG-300 AND GLN-321</scope>
</reference>
<reference key="12">
    <citation type="journal article" date="2012" name="Nat. Commun.">
        <title>Quantitative maps of protein phosphorylation sites across 14 different rat organs and tissues.</title>
        <authorList>
            <person name="Lundby A."/>
            <person name="Secher A."/>
            <person name="Lage K."/>
            <person name="Nordsborg N.B."/>
            <person name="Dmytriyev A."/>
            <person name="Lundby C."/>
            <person name="Olsen J.V."/>
        </authorList>
    </citation>
    <scope>PHOSPHORYLATION [LARGE SCALE ANALYSIS] AT SER-375; SER-387; SER-394; TYR-931; THR-1131; SER-1135; SER-1160; SER-1167; THR-1235; SER-1254; SER-1421; SER-1511 AND SER-1644</scope>
    <scope>IDENTIFICATION BY MASS SPECTROMETRY [LARGE SCALE ANALYSIS]</scope>
</reference>
<reference key="13">
    <citation type="journal article" date="2013" name="J. Biol. Chem.">
        <title>SHANK3 gene mutations associated with autism facilitate ligand binding to the Shank3 ankyrin repeat region.</title>
        <authorList>
            <person name="Mameza M.G."/>
            <person name="Dvoretskova E."/>
            <person name="Bamann M."/>
            <person name="Hoenck H.H."/>
            <person name="Gueler T."/>
            <person name="Boeckers T.M."/>
            <person name="Schoen M."/>
            <person name="Verpelli C."/>
            <person name="Sala C."/>
            <person name="Barsukov I."/>
            <person name="Dityatev A."/>
            <person name="Kreienkamp H.J."/>
        </authorList>
    </citation>
    <scope>FUNCTION</scope>
    <scope>DOMAIN</scope>
    <scope>INTERACTION WITH SHARPIN AND SPTAN1</scope>
    <scope>SUBCELLULAR LOCATION</scope>
    <scope>MUTAGENESIS OF LEU-68; ARG-300 AND GLN-321</scope>
</reference>
<reference key="14">
    <citation type="journal article" date="2013" name="J. Neurosci.">
        <title>Shank3 deficiency induces NMDA receptor hypofunction via an actin-dependent mechanism.</title>
        <authorList>
            <person name="Duffney L.J."/>
            <person name="Wei J."/>
            <person name="Cheng J."/>
            <person name="Liu W."/>
            <person name="Smith K.R."/>
            <person name="Kittler J.T."/>
            <person name="Yan Z."/>
        </authorList>
    </citation>
    <scope>FUNCTION IN NMDA RECEPTOR SIGNALING REGULATION</scope>
</reference>
<reference key="15">
    <citation type="journal article" date="2006" name="Science">
        <title>An architectural framework that may lie at the core of the postsynaptic density.</title>
        <authorList>
            <person name="Baron M.K."/>
            <person name="Boeckers T.M."/>
            <person name="Vaida B."/>
            <person name="Faham S."/>
            <person name="Gingery M."/>
            <person name="Sawaya M.R."/>
            <person name="Salyer D."/>
            <person name="Gundelfinger E.D."/>
            <person name="Bowie J.U."/>
        </authorList>
    </citation>
    <scope>X-RAY CRYSTALLOGRAPHY (2.1 ANGSTROMS) OF 1674-1740</scope>
</reference>
<organism>
    <name type="scientific">Rattus norvegicus</name>
    <name type="common">Rat</name>
    <dbReference type="NCBI Taxonomy" id="10116"/>
    <lineage>
        <taxon>Eukaryota</taxon>
        <taxon>Metazoa</taxon>
        <taxon>Chordata</taxon>
        <taxon>Craniata</taxon>
        <taxon>Vertebrata</taxon>
        <taxon>Euteleostomi</taxon>
        <taxon>Mammalia</taxon>
        <taxon>Eutheria</taxon>
        <taxon>Euarchontoglires</taxon>
        <taxon>Glires</taxon>
        <taxon>Rodentia</taxon>
        <taxon>Myomorpha</taxon>
        <taxon>Muroidea</taxon>
        <taxon>Muridae</taxon>
        <taxon>Murinae</taxon>
        <taxon>Rattus</taxon>
    </lineage>
</organism>
<proteinExistence type="evidence at protein level"/>
<protein>
    <recommendedName>
        <fullName>SH3 and multiple ankyrin repeat domains protein 3</fullName>
        <shortName>Shank3</shortName>
    </recommendedName>
    <alternativeName>
        <fullName>Proline-rich synapse-associated protein 2</fullName>
        <shortName>ProSAP2</shortName>
    </alternativeName>
    <alternativeName>
        <fullName>SPANK-2</fullName>
    </alternativeName>
</protein>